<name>DUSA_VIBPA</name>
<comment type="function">
    <text evidence="1">Catalyzes the synthesis of 5,6-dihydrouridine (D), a modified base found in the D-loop of most tRNAs, via the reduction of the C5-C6 double bond in target uridines. Specifically modifies U20 and U20a in tRNAs.</text>
</comment>
<comment type="catalytic activity">
    <reaction evidence="1">
        <text>5,6-dihydrouridine(20) in tRNA + NADP(+) = uridine(20) in tRNA + NADPH + H(+)</text>
        <dbReference type="Rhea" id="RHEA:53336"/>
        <dbReference type="Rhea" id="RHEA-COMP:13533"/>
        <dbReference type="Rhea" id="RHEA-COMP:13534"/>
        <dbReference type="ChEBI" id="CHEBI:15378"/>
        <dbReference type="ChEBI" id="CHEBI:57783"/>
        <dbReference type="ChEBI" id="CHEBI:58349"/>
        <dbReference type="ChEBI" id="CHEBI:65315"/>
        <dbReference type="ChEBI" id="CHEBI:74443"/>
        <dbReference type="EC" id="1.3.1.91"/>
    </reaction>
</comment>
<comment type="catalytic activity">
    <reaction evidence="1">
        <text>5,6-dihydrouridine(20) in tRNA + NAD(+) = uridine(20) in tRNA + NADH + H(+)</text>
        <dbReference type="Rhea" id="RHEA:53340"/>
        <dbReference type="Rhea" id="RHEA-COMP:13533"/>
        <dbReference type="Rhea" id="RHEA-COMP:13534"/>
        <dbReference type="ChEBI" id="CHEBI:15378"/>
        <dbReference type="ChEBI" id="CHEBI:57540"/>
        <dbReference type="ChEBI" id="CHEBI:57945"/>
        <dbReference type="ChEBI" id="CHEBI:65315"/>
        <dbReference type="ChEBI" id="CHEBI:74443"/>
        <dbReference type="EC" id="1.3.1.91"/>
    </reaction>
</comment>
<comment type="catalytic activity">
    <reaction evidence="1">
        <text>5,6-dihydrouridine(20a) in tRNA + NADP(+) = uridine(20a) in tRNA + NADPH + H(+)</text>
        <dbReference type="Rhea" id="RHEA:53344"/>
        <dbReference type="Rhea" id="RHEA-COMP:13535"/>
        <dbReference type="Rhea" id="RHEA-COMP:13536"/>
        <dbReference type="ChEBI" id="CHEBI:15378"/>
        <dbReference type="ChEBI" id="CHEBI:57783"/>
        <dbReference type="ChEBI" id="CHEBI:58349"/>
        <dbReference type="ChEBI" id="CHEBI:65315"/>
        <dbReference type="ChEBI" id="CHEBI:74443"/>
    </reaction>
</comment>
<comment type="catalytic activity">
    <reaction evidence="1">
        <text>5,6-dihydrouridine(20a) in tRNA + NAD(+) = uridine(20a) in tRNA + NADH + H(+)</text>
        <dbReference type="Rhea" id="RHEA:53348"/>
        <dbReference type="Rhea" id="RHEA-COMP:13535"/>
        <dbReference type="Rhea" id="RHEA-COMP:13536"/>
        <dbReference type="ChEBI" id="CHEBI:15378"/>
        <dbReference type="ChEBI" id="CHEBI:57540"/>
        <dbReference type="ChEBI" id="CHEBI:57945"/>
        <dbReference type="ChEBI" id="CHEBI:65315"/>
        <dbReference type="ChEBI" id="CHEBI:74443"/>
    </reaction>
</comment>
<comment type="cofactor">
    <cofactor evidence="1">
        <name>FMN</name>
        <dbReference type="ChEBI" id="CHEBI:58210"/>
    </cofactor>
</comment>
<comment type="similarity">
    <text evidence="1">Belongs to the Dus family. DusA subfamily.</text>
</comment>
<protein>
    <recommendedName>
        <fullName evidence="1">tRNA-dihydrouridine(20/20a) synthase</fullName>
        <ecNumber evidence="1">1.3.1.-</ecNumber>
        <ecNumber evidence="1">1.3.1.91</ecNumber>
    </recommendedName>
    <alternativeName>
        <fullName evidence="1">U20-specific dihydrouridine synthase</fullName>
        <shortName evidence="1">U20-specific Dus</shortName>
    </alternativeName>
    <alternativeName>
        <fullName evidence="1">tRNA-dihydrouridine synthase A</fullName>
    </alternativeName>
</protein>
<organism>
    <name type="scientific">Vibrio parahaemolyticus serotype O3:K6 (strain RIMD 2210633)</name>
    <dbReference type="NCBI Taxonomy" id="223926"/>
    <lineage>
        <taxon>Bacteria</taxon>
        <taxon>Pseudomonadati</taxon>
        <taxon>Pseudomonadota</taxon>
        <taxon>Gammaproteobacteria</taxon>
        <taxon>Vibrionales</taxon>
        <taxon>Vibrionaceae</taxon>
        <taxon>Vibrio</taxon>
    </lineage>
</organism>
<keyword id="KW-0285">Flavoprotein</keyword>
<keyword id="KW-0288">FMN</keyword>
<keyword id="KW-0521">NADP</keyword>
<keyword id="KW-0560">Oxidoreductase</keyword>
<keyword id="KW-0694">RNA-binding</keyword>
<keyword id="KW-0819">tRNA processing</keyword>
<keyword id="KW-0820">tRNA-binding</keyword>
<reference key="1">
    <citation type="journal article" date="2003" name="Lancet">
        <title>Genome sequence of Vibrio parahaemolyticus: a pathogenic mechanism distinct from that of V. cholerae.</title>
        <authorList>
            <person name="Makino K."/>
            <person name="Oshima K."/>
            <person name="Kurokawa K."/>
            <person name="Yokoyama K."/>
            <person name="Uda T."/>
            <person name="Tagomori K."/>
            <person name="Iijima Y."/>
            <person name="Najima M."/>
            <person name="Nakano M."/>
            <person name="Yamashita A."/>
            <person name="Kubota Y."/>
            <person name="Kimura S."/>
            <person name="Yasunaga T."/>
            <person name="Honda T."/>
            <person name="Shinagawa H."/>
            <person name="Hattori M."/>
            <person name="Iida T."/>
        </authorList>
    </citation>
    <scope>NUCLEOTIDE SEQUENCE [LARGE SCALE GENOMIC DNA]</scope>
    <source>
        <strain>RIMD 2210633</strain>
    </source>
</reference>
<proteinExistence type="inferred from homology"/>
<dbReference type="EC" id="1.3.1.-" evidence="1"/>
<dbReference type="EC" id="1.3.1.91" evidence="1"/>
<dbReference type="EMBL" id="BA000031">
    <property type="protein sequence ID" value="BAC60990.1"/>
    <property type="molecule type" value="Genomic_DNA"/>
</dbReference>
<dbReference type="RefSeq" id="NP_799106.1">
    <property type="nucleotide sequence ID" value="NC_004603.1"/>
</dbReference>
<dbReference type="RefSeq" id="WP_005477377.1">
    <property type="nucleotide sequence ID" value="NC_004603.1"/>
</dbReference>
<dbReference type="SMR" id="Q87L85"/>
<dbReference type="GeneID" id="1190277"/>
<dbReference type="KEGG" id="vpa:VP2727"/>
<dbReference type="PATRIC" id="fig|223926.6.peg.2624"/>
<dbReference type="eggNOG" id="COG0042">
    <property type="taxonomic scope" value="Bacteria"/>
</dbReference>
<dbReference type="HOGENOM" id="CLU_013299_2_1_6"/>
<dbReference type="Proteomes" id="UP000002493">
    <property type="component" value="Chromosome 1"/>
</dbReference>
<dbReference type="GO" id="GO:0050660">
    <property type="term" value="F:flavin adenine dinucleotide binding"/>
    <property type="evidence" value="ECO:0007669"/>
    <property type="project" value="InterPro"/>
</dbReference>
<dbReference type="GO" id="GO:0010181">
    <property type="term" value="F:FMN binding"/>
    <property type="evidence" value="ECO:0007669"/>
    <property type="project" value="UniProtKB-UniRule"/>
</dbReference>
<dbReference type="GO" id="GO:0000049">
    <property type="term" value="F:tRNA binding"/>
    <property type="evidence" value="ECO:0007669"/>
    <property type="project" value="UniProtKB-UniRule"/>
</dbReference>
<dbReference type="GO" id="GO:0102264">
    <property type="term" value="F:tRNA-dihydrouridine20 synthase activity"/>
    <property type="evidence" value="ECO:0007669"/>
    <property type="project" value="UniProtKB-EC"/>
</dbReference>
<dbReference type="GO" id="GO:0102266">
    <property type="term" value="F:tRNA-dihydrouridine20a synthase activity"/>
    <property type="evidence" value="ECO:0007669"/>
    <property type="project" value="RHEA"/>
</dbReference>
<dbReference type="CDD" id="cd02801">
    <property type="entry name" value="DUS_like_FMN"/>
    <property type="match status" value="1"/>
</dbReference>
<dbReference type="FunFam" id="1.20.120.1460:FF:000001">
    <property type="entry name" value="tRNA-dihydrouridine(20/20a) synthase"/>
    <property type="match status" value="1"/>
</dbReference>
<dbReference type="FunFam" id="3.20.20.70:FF:000083">
    <property type="entry name" value="tRNA-dihydrouridine(20/20a) synthase"/>
    <property type="match status" value="1"/>
</dbReference>
<dbReference type="Gene3D" id="1.20.120.1460">
    <property type="match status" value="1"/>
</dbReference>
<dbReference type="Gene3D" id="3.20.20.70">
    <property type="entry name" value="Aldolase class I"/>
    <property type="match status" value="1"/>
</dbReference>
<dbReference type="HAMAP" id="MF_02041">
    <property type="entry name" value="DusA_subfam"/>
    <property type="match status" value="1"/>
</dbReference>
<dbReference type="InterPro" id="IPR013785">
    <property type="entry name" value="Aldolase_TIM"/>
</dbReference>
<dbReference type="InterPro" id="IPR035587">
    <property type="entry name" value="DUS-like_FMN-bd"/>
</dbReference>
<dbReference type="InterPro" id="IPR001269">
    <property type="entry name" value="DUS_fam"/>
</dbReference>
<dbReference type="InterPro" id="IPR004653">
    <property type="entry name" value="DusA"/>
</dbReference>
<dbReference type="InterPro" id="IPR018517">
    <property type="entry name" value="tRNA_hU_synthase_CS"/>
</dbReference>
<dbReference type="NCBIfam" id="NF008774">
    <property type="entry name" value="PRK11815.1"/>
    <property type="match status" value="1"/>
</dbReference>
<dbReference type="NCBIfam" id="TIGR00742">
    <property type="entry name" value="yjbN"/>
    <property type="match status" value="1"/>
</dbReference>
<dbReference type="PANTHER" id="PTHR42907">
    <property type="entry name" value="FMN-LINKED OXIDOREDUCTASES SUPERFAMILY PROTEIN"/>
    <property type="match status" value="1"/>
</dbReference>
<dbReference type="PANTHER" id="PTHR42907:SF1">
    <property type="entry name" value="FMN-LINKED OXIDOREDUCTASES SUPERFAMILY PROTEIN"/>
    <property type="match status" value="1"/>
</dbReference>
<dbReference type="Pfam" id="PF01207">
    <property type="entry name" value="Dus"/>
    <property type="match status" value="1"/>
</dbReference>
<dbReference type="PIRSF" id="PIRSF006621">
    <property type="entry name" value="Dus"/>
    <property type="match status" value="1"/>
</dbReference>
<dbReference type="SUPFAM" id="SSF51395">
    <property type="entry name" value="FMN-linked oxidoreductases"/>
    <property type="match status" value="1"/>
</dbReference>
<dbReference type="PROSITE" id="PS01136">
    <property type="entry name" value="UPF0034"/>
    <property type="match status" value="1"/>
</dbReference>
<evidence type="ECO:0000255" key="1">
    <source>
        <dbReference type="HAMAP-Rule" id="MF_02041"/>
    </source>
</evidence>
<accession>Q87L85</accession>
<gene>
    <name evidence="1" type="primary">dusA</name>
    <name type="ordered locus">VP2727</name>
</gene>
<sequence>MTHSCRLSVAPMLDWTDRHCRYFHRLMTKETLLYTEMVTTGAIIHGKGDFLAYNEEEHPLALQLGGSNPEDLAKCAKLAQERGYDEINLNVGCPSDRVQNGRFGACLMAEPQLVADCVAAMKEVVDVPVTVKTRIGIDDQDSYEFLTDFVSIVSEKGGCEQFTIHARKAWLSGLSPKENREIPPLDYPRAYQLKQDFSHLTIAINGGVKSLEEAKVHLQHLDGVMIGREAYQSPYLLASVDQELFGSNAPVKKRSEIVEEMYPYIEAQLAKGAYLGHITRHMLGLFQNMPGARQWRRHISENAHKPGSGLEVLQDALAKIPKELNV</sequence>
<feature type="chain" id="PRO_0000162077" description="tRNA-dihydrouridine(20/20a) synthase">
    <location>
        <begin position="1"/>
        <end position="326"/>
    </location>
</feature>
<feature type="active site" description="Proton donor" evidence="1">
    <location>
        <position position="93"/>
    </location>
</feature>
<feature type="binding site" evidence="1">
    <location>
        <begin position="11"/>
        <end position="13"/>
    </location>
    <ligand>
        <name>FMN</name>
        <dbReference type="ChEBI" id="CHEBI:58210"/>
    </ligand>
</feature>
<feature type="binding site" evidence="1">
    <location>
        <position position="63"/>
    </location>
    <ligand>
        <name>FMN</name>
        <dbReference type="ChEBI" id="CHEBI:58210"/>
    </ligand>
</feature>
<feature type="binding site" evidence="1">
    <location>
        <position position="132"/>
    </location>
    <ligand>
        <name>FMN</name>
        <dbReference type="ChEBI" id="CHEBI:58210"/>
    </ligand>
</feature>
<feature type="binding site" evidence="1">
    <location>
        <position position="165"/>
    </location>
    <ligand>
        <name>FMN</name>
        <dbReference type="ChEBI" id="CHEBI:58210"/>
    </ligand>
</feature>
<feature type="binding site" evidence="1">
    <location>
        <begin position="205"/>
        <end position="207"/>
    </location>
    <ligand>
        <name>FMN</name>
        <dbReference type="ChEBI" id="CHEBI:58210"/>
    </ligand>
</feature>
<feature type="binding site" evidence="1">
    <location>
        <begin position="227"/>
        <end position="228"/>
    </location>
    <ligand>
        <name>FMN</name>
        <dbReference type="ChEBI" id="CHEBI:58210"/>
    </ligand>
</feature>
<feature type="site" description="Interacts with tRNA" evidence="1">
    <location>
        <position position="90"/>
    </location>
</feature>
<feature type="site" description="Interacts with tRNA; defines subfamily-specific binding signature" evidence="1">
    <location>
        <position position="177"/>
    </location>
</feature>
<feature type="site" description="Interacts with tRNA" evidence="1">
    <location>
        <position position="180"/>
    </location>
</feature>
<feature type="site" description="Interacts with tRNA; defines subfamily-specific binding signature" evidence="1">
    <location>
        <position position="293"/>
    </location>
</feature>
<feature type="site" description="Interacts with tRNA; defines subfamily-specific binding signature" evidence="1">
    <location>
        <position position="296"/>
    </location>
</feature>